<keyword id="KW-0025">Alternative splicing</keyword>
<keyword id="KW-1015">Disulfide bond</keyword>
<keyword id="KW-0325">Glycoprotein</keyword>
<keyword id="KW-1032">Host cell membrane</keyword>
<keyword id="KW-1043">Host membrane</keyword>
<keyword id="KW-0945">Host-virus interaction</keyword>
<keyword id="KW-0375">Hydrogen ion transport</keyword>
<keyword id="KW-1083">Inhibition of host autophagy by virus</keyword>
<keyword id="KW-0407">Ion channel</keyword>
<keyword id="KW-0406">Ion transport</keyword>
<keyword id="KW-0449">Lipoprotein</keyword>
<keyword id="KW-0472">Membrane</keyword>
<keyword id="KW-0564">Palmitate</keyword>
<keyword id="KW-0597">Phosphoprotein</keyword>
<keyword id="KW-0735">Signal-anchor</keyword>
<keyword id="KW-0812">Transmembrane</keyword>
<keyword id="KW-1133">Transmembrane helix</keyword>
<keyword id="KW-0813">Transport</keyword>
<keyword id="KW-1182">Viral ion channel</keyword>
<keyword id="KW-0946">Virion</keyword>
<reference key="1">
    <citation type="journal article" date="1984" name="Virology">
        <title>Genetic relatedness between A/Swine/Iowa/15/30(H1N1) and human influenza viruses.</title>
        <authorList>
            <person name="Nakajima K."/>
            <person name="Nobusawa E."/>
            <person name="Nakajima S."/>
        </authorList>
    </citation>
    <scope>NUCLEOTIDE SEQUENCE [GENOMIC RNA]</scope>
</reference>
<reference key="2">
    <citation type="journal article" date="2004" name="Virus Res.">
        <title>Assembly and budding of influenza virus.</title>
        <authorList>
            <person name="Nayak D.P."/>
            <person name="Hui E.K."/>
            <person name="Barman S."/>
        </authorList>
    </citation>
    <scope>REVIEW</scope>
</reference>
<reference key="3">
    <citation type="journal article" date="2003" name="FEBS Lett.">
        <title>Proton conduction through the M2 protein of the influenza A virus; a quantitative, mechanistic analysis of experimental data.</title>
        <authorList>
            <person name="Lear J.D."/>
        </authorList>
    </citation>
    <scope>REVIEW</scope>
</reference>
<reference key="4">
    <citation type="journal article" date="2003" name="FEBS Lett.">
        <title>Computational studies of proton transport through the M2 channel.</title>
        <authorList>
            <person name="Wu Y."/>
            <person name="Voth G.A."/>
        </authorList>
    </citation>
    <scope>REVIEW</scope>
</reference>
<dbReference type="EMBL" id="M33045">
    <property type="protein sequence ID" value="AAA43683.1"/>
    <property type="status" value="ALT_SEQ"/>
    <property type="molecule type" value="Genomic_RNA"/>
</dbReference>
<dbReference type="PIR" id="T09280">
    <property type="entry name" value="T09280"/>
</dbReference>
<dbReference type="SMR" id="P05779"/>
<dbReference type="GlyCosmos" id="P05779">
    <property type="glycosylation" value="1 site, No reported glycans"/>
</dbReference>
<dbReference type="GO" id="GO:0020002">
    <property type="term" value="C:host cell plasma membrane"/>
    <property type="evidence" value="ECO:0007669"/>
    <property type="project" value="UniProtKB-SubCell"/>
</dbReference>
<dbReference type="GO" id="GO:0016020">
    <property type="term" value="C:membrane"/>
    <property type="evidence" value="ECO:0007669"/>
    <property type="project" value="UniProtKB-UniRule"/>
</dbReference>
<dbReference type="GO" id="GO:0055036">
    <property type="term" value="C:virion membrane"/>
    <property type="evidence" value="ECO:0007669"/>
    <property type="project" value="UniProtKB-SubCell"/>
</dbReference>
<dbReference type="GO" id="GO:0005216">
    <property type="term" value="F:monoatomic ion channel activity"/>
    <property type="evidence" value="ECO:0007669"/>
    <property type="project" value="UniProtKB-UniRule"/>
</dbReference>
<dbReference type="GO" id="GO:0015078">
    <property type="term" value="F:proton transmembrane transporter activity"/>
    <property type="evidence" value="ECO:0007669"/>
    <property type="project" value="UniProtKB-UniRule"/>
</dbReference>
<dbReference type="GO" id="GO:0051259">
    <property type="term" value="P:protein complex oligomerization"/>
    <property type="evidence" value="ECO:0007669"/>
    <property type="project" value="UniProtKB-UniRule"/>
</dbReference>
<dbReference type="GO" id="GO:0044694">
    <property type="term" value="P:symbiont genome entry into host cell via pore formation in plasma membrane"/>
    <property type="evidence" value="ECO:0007669"/>
    <property type="project" value="UniProtKB-UniRule"/>
</dbReference>
<dbReference type="GO" id="GO:0140321">
    <property type="term" value="P:symbiont-mediated suppression of host autophagy"/>
    <property type="evidence" value="ECO:0007669"/>
    <property type="project" value="UniProtKB-KW"/>
</dbReference>
<dbReference type="Gene3D" id="6.10.250.1640">
    <property type="match status" value="1"/>
</dbReference>
<dbReference type="HAMAP" id="MF_04069">
    <property type="entry name" value="INFV_M2"/>
    <property type="match status" value="1"/>
</dbReference>
<dbReference type="InterPro" id="IPR002089">
    <property type="entry name" value="Flu_M2"/>
</dbReference>
<dbReference type="Pfam" id="PF00599">
    <property type="entry name" value="Flu_M2"/>
    <property type="match status" value="1"/>
</dbReference>
<organismHost>
    <name type="scientific">Aves</name>
    <dbReference type="NCBI Taxonomy" id="8782"/>
</organismHost>
<organismHost>
    <name type="scientific">Homo sapiens</name>
    <name type="common">Human</name>
    <dbReference type="NCBI Taxonomy" id="9606"/>
</organismHost>
<organismHost>
    <name type="scientific">Sus scrofa</name>
    <name type="common">Pig</name>
    <dbReference type="NCBI Taxonomy" id="9823"/>
</organismHost>
<sequence>MSLPTEVETPTRNEWGCRCNDSSDHITIAAKFIGILHLILWILDRLFFKCIYRRLKYGPKRGPSTEGVPDSMREEYRQKQQNAADVDDGHFVNIELE</sequence>
<proteinExistence type="inferred from homology"/>
<feature type="chain" id="PRO_0000078895" description="Matrix protein 2">
    <location>
        <begin position="1"/>
        <end position="97"/>
    </location>
</feature>
<feature type="topological domain" description="Virion surface" evidence="1">
    <location>
        <begin position="1"/>
        <end position="22"/>
    </location>
</feature>
<feature type="transmembrane region" description="Helical; Signal-anchor for type III membrane protein" evidence="1">
    <location>
        <begin position="23"/>
        <end position="43"/>
    </location>
</feature>
<feature type="topological domain" description="Intravirion" evidence="1">
    <location>
        <begin position="44"/>
        <end position="97"/>
    </location>
</feature>
<feature type="region of interest" description="Disordered" evidence="2">
    <location>
        <begin position="58"/>
        <end position="89"/>
    </location>
</feature>
<feature type="site" description="Essential for channel activity, possibly by being protonated during channel activation, and by forming the channel gate and the selective filter" evidence="1">
    <location>
        <position position="37"/>
    </location>
</feature>
<feature type="site" description="Seems to be involved in pH gating" evidence="1">
    <location>
        <position position="41"/>
    </location>
</feature>
<feature type="modified residue" description="Phosphoserine; by host" evidence="1">
    <location>
        <position position="64"/>
    </location>
</feature>
<feature type="lipid moiety-binding region" description="S-palmitoyl cysteine; by host" evidence="1">
    <location>
        <position position="50"/>
    </location>
</feature>
<feature type="glycosylation site" description="N-linked (GlcNAc...) asparagine; by host" evidence="1">
    <location>
        <position position="20"/>
    </location>
</feature>
<feature type="disulfide bond" description="Interchain (with C-17)" evidence="1">
    <location>
        <position position="17"/>
    </location>
</feature>
<feature type="disulfide bond" description="Interchain (with C-19)" evidence="1">
    <location>
        <position position="19"/>
    </location>
</feature>
<evidence type="ECO:0000255" key="1">
    <source>
        <dbReference type="HAMAP-Rule" id="MF_04069"/>
    </source>
</evidence>
<evidence type="ECO:0000256" key="2">
    <source>
        <dbReference type="SAM" id="MobiDB-lite"/>
    </source>
</evidence>
<comment type="function">
    <text evidence="1">Forms a proton-selective ion channel that is necessary for the efficient release of the viral genome during virus entry. After attaching to the cell surface, the virion enters the cell by endocytosis. Acidification of the endosome triggers M2 ion channel activity. The influx of protons into virion interior is believed to disrupt interactions between the viral ribonucleoprotein (RNP), matrix protein 1 (M1), and lipid bilayers, thereby freeing the viral genome from interaction with viral proteins and enabling RNA segments to migrate to the host cell nucleus, where influenza virus RNA transcription and replication occur. Also plays a role in viral proteins secretory pathway. Elevates the intravesicular pH of normally acidic compartments, such as trans-Golgi network, preventing newly formed hemagglutinin from premature switching to the fusion-active conformation.</text>
</comment>
<comment type="activity regulation">
    <text>The M2 protein from most influenza A strains is inhibited by amantadine and rimantadine, resulting in viral uncoating incapacity. Emergence of amantadine-resistant variants is usually rapid.</text>
</comment>
<comment type="subunit">
    <text evidence="1">Homotetramer; composed of two disulfide-linked dimers held together by non-covalent interactions. May interact with matrix protein 1.</text>
</comment>
<comment type="subcellular location">
    <subcellularLocation>
        <location evidence="1">Virion membrane</location>
    </subcellularLocation>
    <subcellularLocation>
        <location evidence="1">Host apical cell membrane</location>
        <topology evidence="1">Single-pass type III membrane protein</topology>
    </subcellularLocation>
    <text evidence="1">Abundantly expressed at the apical plasma membrane in infected polarized epithelial cells, in close proximity to budding and assembled virions. Minor component of virions (only 16-20 molecules/virion).</text>
</comment>
<comment type="alternative products">
    <event type="alternative splicing"/>
    <isoform>
        <id>P05779-1</id>
        <name>M2</name>
        <sequence type="displayed"/>
    </isoform>
    <isoform>
        <id>P05776-1</id>
        <name>M1</name>
        <sequence type="external"/>
    </isoform>
    <text>Only the first 9 residues are shared by the 2 isoforms.</text>
</comment>
<comment type="domain">
    <text evidence="1">Cytoplasmic tail plays an important role in virion assembly and morphogenesis.</text>
</comment>
<comment type="miscellaneous">
    <text evidence="1">When the channel is activated, one or more imidazole moieties of His-37 probably become bi-protonated.</text>
</comment>
<comment type="similarity">
    <text evidence="1">Belongs to the influenza viruses matrix protein M2 family.</text>
</comment>
<protein>
    <recommendedName>
        <fullName evidence="1">Matrix protein 2</fullName>
    </recommendedName>
    <alternativeName>
        <fullName evidence="1">Proton channel protein M2</fullName>
    </alternativeName>
</protein>
<organism>
    <name type="scientific">Influenza A virus (strain A/Swine/Iowa/15/1930 H1N1)</name>
    <dbReference type="NCBI Taxonomy" id="380342"/>
    <lineage>
        <taxon>Viruses</taxon>
        <taxon>Riboviria</taxon>
        <taxon>Orthornavirae</taxon>
        <taxon>Negarnaviricota</taxon>
        <taxon>Polyploviricotina</taxon>
        <taxon>Insthoviricetes</taxon>
        <taxon>Articulavirales</taxon>
        <taxon>Orthomyxoviridae</taxon>
        <taxon>Alphainfluenzavirus</taxon>
        <taxon>Alphainfluenzavirus influenzae</taxon>
        <taxon>Influenza A virus</taxon>
    </lineage>
</organism>
<accession>P05779</accession>
<gene>
    <name evidence="1" type="primary">M</name>
</gene>
<name>M2_I30A0</name>